<proteinExistence type="evidence at transcript level"/>
<organism>
    <name type="scientific">Arabidopsis thaliana</name>
    <name type="common">Mouse-ear cress</name>
    <dbReference type="NCBI Taxonomy" id="3702"/>
    <lineage>
        <taxon>Eukaryota</taxon>
        <taxon>Viridiplantae</taxon>
        <taxon>Streptophyta</taxon>
        <taxon>Embryophyta</taxon>
        <taxon>Tracheophyta</taxon>
        <taxon>Spermatophyta</taxon>
        <taxon>Magnoliopsida</taxon>
        <taxon>eudicotyledons</taxon>
        <taxon>Gunneridae</taxon>
        <taxon>Pentapetalae</taxon>
        <taxon>rosids</taxon>
        <taxon>malvids</taxon>
        <taxon>Brassicales</taxon>
        <taxon>Brassicaceae</taxon>
        <taxon>Camelineae</taxon>
        <taxon>Arabidopsis</taxon>
    </lineage>
</organism>
<name>PPR88_ARATH</name>
<protein>
    <recommendedName>
        <fullName>Pentatricopeptide repeat-containing protein At1g62260, mitochondrial</fullName>
    </recommendedName>
</protein>
<dbReference type="EMBL" id="AC000375">
    <property type="protein sequence ID" value="AAB60776.1"/>
    <property type="molecule type" value="Genomic_DNA"/>
</dbReference>
<dbReference type="EMBL" id="CP002684">
    <property type="protein sequence ID" value="AEE33942.1"/>
    <property type="molecule type" value="Genomic_DNA"/>
</dbReference>
<dbReference type="PIR" id="B96649">
    <property type="entry name" value="B96649"/>
</dbReference>
<dbReference type="RefSeq" id="NP_176416.1">
    <property type="nucleotide sequence ID" value="NM_104906.2"/>
</dbReference>
<dbReference type="SMR" id="O04590"/>
<dbReference type="BioGRID" id="27744">
    <property type="interactions" value="3"/>
</dbReference>
<dbReference type="FunCoup" id="O04590">
    <property type="interactions" value="337"/>
</dbReference>
<dbReference type="STRING" id="3702.O04590"/>
<dbReference type="iPTMnet" id="O04590"/>
<dbReference type="PaxDb" id="3702-AT1G62260.1"/>
<dbReference type="ProteomicsDB" id="226334"/>
<dbReference type="EnsemblPlants" id="AT1G62260.1">
    <property type="protein sequence ID" value="AT1G62260.1"/>
    <property type="gene ID" value="AT1G62260"/>
</dbReference>
<dbReference type="GeneID" id="842523"/>
<dbReference type="Gramene" id="AT1G62260.1">
    <property type="protein sequence ID" value="AT1G62260.1"/>
    <property type="gene ID" value="AT1G62260"/>
</dbReference>
<dbReference type="KEGG" id="ath:AT1G62260"/>
<dbReference type="Araport" id="AT1G62260"/>
<dbReference type="TAIR" id="AT1G62260">
    <property type="gene designation" value="MEF9"/>
</dbReference>
<dbReference type="eggNOG" id="KOG4197">
    <property type="taxonomic scope" value="Eukaryota"/>
</dbReference>
<dbReference type="HOGENOM" id="CLU_002706_30_5_1"/>
<dbReference type="InParanoid" id="O04590"/>
<dbReference type="OMA" id="DFFEKMP"/>
<dbReference type="PhylomeDB" id="O04590"/>
<dbReference type="PRO" id="PR:O04590"/>
<dbReference type="Proteomes" id="UP000006548">
    <property type="component" value="Chromosome 1"/>
</dbReference>
<dbReference type="ExpressionAtlas" id="O04590">
    <property type="expression patterns" value="baseline and differential"/>
</dbReference>
<dbReference type="GO" id="GO:0005739">
    <property type="term" value="C:mitochondrion"/>
    <property type="evidence" value="ECO:0007669"/>
    <property type="project" value="UniProtKB-SubCell"/>
</dbReference>
<dbReference type="GO" id="GO:0003723">
    <property type="term" value="F:RNA binding"/>
    <property type="evidence" value="ECO:0007669"/>
    <property type="project" value="InterPro"/>
</dbReference>
<dbReference type="GO" id="GO:0016554">
    <property type="term" value="P:cytidine to uridine editing"/>
    <property type="evidence" value="ECO:0000315"/>
    <property type="project" value="TAIR"/>
</dbReference>
<dbReference type="FunFam" id="1.25.40.10:FF:003310">
    <property type="entry name" value="Pentatricopeptide repeat-containing protein At1g62260, mitochondrial"/>
    <property type="match status" value="1"/>
</dbReference>
<dbReference type="FunFam" id="1.25.40.10:FF:003697">
    <property type="entry name" value="Pentatricopeptide repeat-containing protein At3g02330, mitochondrial"/>
    <property type="match status" value="1"/>
</dbReference>
<dbReference type="FunFam" id="1.25.40.10:FF:000031">
    <property type="entry name" value="Pentatricopeptide repeat-containing protein mitochondrial"/>
    <property type="match status" value="1"/>
</dbReference>
<dbReference type="Gene3D" id="1.25.40.10">
    <property type="entry name" value="Tetratricopeptide repeat domain"/>
    <property type="match status" value="5"/>
</dbReference>
<dbReference type="InterPro" id="IPR046848">
    <property type="entry name" value="E_motif"/>
</dbReference>
<dbReference type="InterPro" id="IPR002885">
    <property type="entry name" value="Pentatricopeptide_rpt"/>
</dbReference>
<dbReference type="InterPro" id="IPR046960">
    <property type="entry name" value="PPR_At4g14850-like_plant"/>
</dbReference>
<dbReference type="InterPro" id="IPR011990">
    <property type="entry name" value="TPR-like_helical_dom_sf"/>
</dbReference>
<dbReference type="NCBIfam" id="TIGR00756">
    <property type="entry name" value="PPR"/>
    <property type="match status" value="11"/>
</dbReference>
<dbReference type="PANTHER" id="PTHR47926">
    <property type="entry name" value="PENTATRICOPEPTIDE REPEAT-CONTAINING PROTEIN"/>
    <property type="match status" value="1"/>
</dbReference>
<dbReference type="PANTHER" id="PTHR47926:SF452">
    <property type="entry name" value="PENTATRICOPEPTIDE REPEAT-CONTAINING PROTEIN"/>
    <property type="match status" value="1"/>
</dbReference>
<dbReference type="Pfam" id="PF20431">
    <property type="entry name" value="E_motif"/>
    <property type="match status" value="1"/>
</dbReference>
<dbReference type="Pfam" id="PF01535">
    <property type="entry name" value="PPR"/>
    <property type="match status" value="4"/>
</dbReference>
<dbReference type="Pfam" id="PF12854">
    <property type="entry name" value="PPR_1"/>
    <property type="match status" value="2"/>
</dbReference>
<dbReference type="Pfam" id="PF13041">
    <property type="entry name" value="PPR_2"/>
    <property type="match status" value="5"/>
</dbReference>
<dbReference type="SUPFAM" id="SSF48452">
    <property type="entry name" value="TPR-like"/>
    <property type="match status" value="1"/>
</dbReference>
<dbReference type="PROSITE" id="PS51375">
    <property type="entry name" value="PPR"/>
    <property type="match status" value="14"/>
</dbReference>
<sequence length="656" mass="74169">MIRSRSVLLIFRKVLYQSSCLKCLLCANSFSTSVSSSLGFRATNKELNQMIRSGYIAEARDIFEKLEARNTVTWNTMISGYVKRREMNQARKLFDVMPKRDVVTWNTMISGYVSCGGIRFLEEARKLFDEMPSRDSFSWNTMISGYAKNRRIGEALLLFEKMPERNAVSWSAMITGFCQNGEVDSAVVLFRKMPVKDSSPLCALVAGLIKNERLSEAAWVLGQYGSLVSGREDLVYAYNTLIVGYGQRGQVEAARCLFDQIPDLCGDDHGGEFRERFCKNVVSWNSMIKAYLKVGDVVSARLLFDQMKDRDTISWNTMIDGYVHVSRMEDAFALFSEMPNRDAHSWNMMVSGYASVGNVELARHYFEKTPEKHTVSWNSIIAAYEKNKDYKEAVDLFIRMNIEGEKPDPHTLTSLLSASTGLVNLRLGMQMHQIVVKTVIPDVPVHNALITMYSRCGEIMESRRIFDEMKLKREVITWNAMIGGYAFHGNASEALNLFGSMKSNGIYPSHITFVSVLNACAHAGLVDEAKAQFVSMMSVYKIEPQMEHYSSLVNVTSGQGQFEEAMYIITSMPFEPDKTVWGALLDACRIYNNVGLAHVAAEAMSRLEPESSTPYVLLYNMYADMGLWDEASQVRMNMESKRIKKERGSSWVDSST</sequence>
<feature type="transit peptide" description="Mitochondrion" evidence="1">
    <location>
        <begin position="1"/>
        <end status="unknown"/>
    </location>
</feature>
<feature type="chain" id="PRO_0000342829" description="Pentatricopeptide repeat-containing protein At1g62260, mitochondrial">
    <location>
        <begin status="unknown"/>
        <end position="656"/>
    </location>
</feature>
<feature type="repeat" description="PPR 1">
    <location>
        <begin position="70"/>
        <end position="104"/>
    </location>
</feature>
<feature type="repeat" description="PPR 2">
    <location>
        <begin position="105"/>
        <end position="134"/>
    </location>
</feature>
<feature type="repeat" description="PPR 3">
    <location>
        <begin position="135"/>
        <end position="169"/>
    </location>
</feature>
<feature type="repeat" description="PPR 4">
    <location>
        <begin position="170"/>
        <end position="200"/>
    </location>
</feature>
<feature type="repeat" description="PPR 5">
    <location>
        <begin position="203"/>
        <end position="227"/>
    </location>
</feature>
<feature type="repeat" description="PPR 6">
    <location>
        <begin position="234"/>
        <end position="264"/>
    </location>
</feature>
<feature type="repeat" description="PPR 7">
    <location>
        <begin position="280"/>
        <end position="310"/>
    </location>
</feature>
<feature type="repeat" description="PPR 8">
    <location>
        <begin position="311"/>
        <end position="345"/>
    </location>
</feature>
<feature type="repeat" description="PPR 9">
    <location>
        <begin position="346"/>
        <end position="372"/>
    </location>
</feature>
<feature type="repeat" description="PPR 10">
    <location>
        <begin position="373"/>
        <end position="407"/>
    </location>
</feature>
<feature type="repeat" description="PPR 11">
    <location>
        <begin position="408"/>
        <end position="438"/>
    </location>
</feature>
<feature type="repeat" description="PPR 12">
    <location>
        <begin position="442"/>
        <end position="472"/>
    </location>
</feature>
<feature type="repeat" description="PPR 13">
    <location>
        <begin position="474"/>
        <end position="508"/>
    </location>
</feature>
<feature type="repeat" description="PPR 14">
    <location>
        <begin position="509"/>
        <end position="544"/>
    </location>
</feature>
<feature type="repeat" description="PPR 15">
    <location>
        <begin position="545"/>
        <end position="575"/>
    </location>
</feature>
<feature type="region of interest" description="Type E motif">
    <location>
        <begin position="580"/>
        <end position="655"/>
    </location>
</feature>
<evidence type="ECO:0000255" key="1"/>
<evidence type="ECO:0000305" key="2"/>
<gene>
    <name type="primary">PCMP-E10</name>
    <name type="ordered locus">At1g62260</name>
    <name type="ORF">F19K23.18</name>
</gene>
<keyword id="KW-0496">Mitochondrion</keyword>
<keyword id="KW-1185">Reference proteome</keyword>
<keyword id="KW-0677">Repeat</keyword>
<keyword id="KW-0809">Transit peptide</keyword>
<reference key="1">
    <citation type="journal article" date="2000" name="Nature">
        <title>Sequence and analysis of chromosome 1 of the plant Arabidopsis thaliana.</title>
        <authorList>
            <person name="Theologis A."/>
            <person name="Ecker J.R."/>
            <person name="Palm C.J."/>
            <person name="Federspiel N.A."/>
            <person name="Kaul S."/>
            <person name="White O."/>
            <person name="Alonso J."/>
            <person name="Altafi H."/>
            <person name="Araujo R."/>
            <person name="Bowman C.L."/>
            <person name="Brooks S.Y."/>
            <person name="Buehler E."/>
            <person name="Chan A."/>
            <person name="Chao Q."/>
            <person name="Chen H."/>
            <person name="Cheuk R.F."/>
            <person name="Chin C.W."/>
            <person name="Chung M.K."/>
            <person name="Conn L."/>
            <person name="Conway A.B."/>
            <person name="Conway A.R."/>
            <person name="Creasy T.H."/>
            <person name="Dewar K."/>
            <person name="Dunn P."/>
            <person name="Etgu P."/>
            <person name="Feldblyum T.V."/>
            <person name="Feng J.-D."/>
            <person name="Fong B."/>
            <person name="Fujii C.Y."/>
            <person name="Gill J.E."/>
            <person name="Goldsmith A.D."/>
            <person name="Haas B."/>
            <person name="Hansen N.F."/>
            <person name="Hughes B."/>
            <person name="Huizar L."/>
            <person name="Hunter J.L."/>
            <person name="Jenkins J."/>
            <person name="Johnson-Hopson C."/>
            <person name="Khan S."/>
            <person name="Khaykin E."/>
            <person name="Kim C.J."/>
            <person name="Koo H.L."/>
            <person name="Kremenetskaia I."/>
            <person name="Kurtz D.B."/>
            <person name="Kwan A."/>
            <person name="Lam B."/>
            <person name="Langin-Hooper S."/>
            <person name="Lee A."/>
            <person name="Lee J.M."/>
            <person name="Lenz C.A."/>
            <person name="Li J.H."/>
            <person name="Li Y.-P."/>
            <person name="Lin X."/>
            <person name="Liu S.X."/>
            <person name="Liu Z.A."/>
            <person name="Luros J.S."/>
            <person name="Maiti R."/>
            <person name="Marziali A."/>
            <person name="Militscher J."/>
            <person name="Miranda M."/>
            <person name="Nguyen M."/>
            <person name="Nierman W.C."/>
            <person name="Osborne B.I."/>
            <person name="Pai G."/>
            <person name="Peterson J."/>
            <person name="Pham P.K."/>
            <person name="Rizzo M."/>
            <person name="Rooney T."/>
            <person name="Rowley D."/>
            <person name="Sakano H."/>
            <person name="Salzberg S.L."/>
            <person name="Schwartz J.R."/>
            <person name="Shinn P."/>
            <person name="Southwick A.M."/>
            <person name="Sun H."/>
            <person name="Tallon L.J."/>
            <person name="Tambunga G."/>
            <person name="Toriumi M.J."/>
            <person name="Town C.D."/>
            <person name="Utterback T."/>
            <person name="Van Aken S."/>
            <person name="Vaysberg M."/>
            <person name="Vysotskaia V.S."/>
            <person name="Walker M."/>
            <person name="Wu D."/>
            <person name="Yu G."/>
            <person name="Fraser C.M."/>
            <person name="Venter J.C."/>
            <person name="Davis R.W."/>
        </authorList>
    </citation>
    <scope>NUCLEOTIDE SEQUENCE [LARGE SCALE GENOMIC DNA]</scope>
    <source>
        <strain>cv. Columbia</strain>
    </source>
</reference>
<reference key="2">
    <citation type="journal article" date="2017" name="Plant J.">
        <title>Araport11: a complete reannotation of the Arabidopsis thaliana reference genome.</title>
        <authorList>
            <person name="Cheng C.Y."/>
            <person name="Krishnakumar V."/>
            <person name="Chan A.P."/>
            <person name="Thibaud-Nissen F."/>
            <person name="Schobel S."/>
            <person name="Town C.D."/>
        </authorList>
    </citation>
    <scope>GENOME REANNOTATION</scope>
    <source>
        <strain>cv. Columbia</strain>
    </source>
</reference>
<reference key="3">
    <citation type="journal article" date="2000" name="Plant Mol. Biol.">
        <title>In Arabidopsis thaliana, 1% of the genome codes for a novel protein family unique to plants.</title>
        <authorList>
            <person name="Aubourg S."/>
            <person name="Boudet N."/>
            <person name="Kreis M."/>
            <person name="Lecharny A."/>
        </authorList>
    </citation>
    <scope>GENE FAMILY</scope>
</reference>
<reference key="4">
    <citation type="journal article" date="2004" name="Plant Cell">
        <title>Genome-wide analysis of Arabidopsis pentatricopeptide repeat proteins reveals their essential role in organelle biogenesis.</title>
        <authorList>
            <person name="Lurin C."/>
            <person name="Andres C."/>
            <person name="Aubourg S."/>
            <person name="Bellaoui M."/>
            <person name="Bitton F."/>
            <person name="Bruyere C."/>
            <person name="Caboche M."/>
            <person name="Debast C."/>
            <person name="Gualberto J."/>
            <person name="Hoffmann B."/>
            <person name="Lecharny A."/>
            <person name="Le Ret M."/>
            <person name="Martin-Magniette M.-L."/>
            <person name="Mireau H."/>
            <person name="Peeters N."/>
            <person name="Renou J.-P."/>
            <person name="Szurek B."/>
            <person name="Taconnat L."/>
            <person name="Small I."/>
        </authorList>
    </citation>
    <scope>GENE FAMILY</scope>
</reference>
<accession>O04590</accession>
<comment type="subcellular location">
    <subcellularLocation>
        <location evidence="2">Mitochondrion</location>
    </subcellularLocation>
</comment>
<comment type="similarity">
    <text evidence="2">Belongs to the PPR family. PCMP-E subfamily.</text>
</comment>
<comment type="online information" name="Pentatricopeptide repeat proteins">
    <link uri="https://ppr.plantenergy.uwa.edu.au"/>
</comment>